<comment type="function">
    <text evidence="1">Involved in the biosynthesis of ADP-glucose, a building block required for the elongation reactions to produce glycogen. Catalyzes the reaction between ATP and alpha-D-glucose 1-phosphate (G1P) to produce pyrophosphate and ADP-Glc.</text>
</comment>
<comment type="catalytic activity">
    <reaction evidence="1">
        <text>alpha-D-glucose 1-phosphate + ATP + H(+) = ADP-alpha-D-glucose + diphosphate</text>
        <dbReference type="Rhea" id="RHEA:12120"/>
        <dbReference type="ChEBI" id="CHEBI:15378"/>
        <dbReference type="ChEBI" id="CHEBI:30616"/>
        <dbReference type="ChEBI" id="CHEBI:33019"/>
        <dbReference type="ChEBI" id="CHEBI:57498"/>
        <dbReference type="ChEBI" id="CHEBI:58601"/>
        <dbReference type="EC" id="2.7.7.27"/>
    </reaction>
</comment>
<comment type="pathway">
    <text evidence="1">Glycan biosynthesis; glycogen biosynthesis.</text>
</comment>
<comment type="subunit">
    <text evidence="1">Homotetramer.</text>
</comment>
<comment type="similarity">
    <text evidence="1">Belongs to the bacterial/plant glucose-1-phosphate adenylyltransferase family.</text>
</comment>
<reference key="1">
    <citation type="journal article" date="2003" name="Lancet">
        <title>Genome sequence of Vibrio parahaemolyticus: a pathogenic mechanism distinct from that of V. cholerae.</title>
        <authorList>
            <person name="Makino K."/>
            <person name="Oshima K."/>
            <person name="Kurokawa K."/>
            <person name="Yokoyama K."/>
            <person name="Uda T."/>
            <person name="Tagomori K."/>
            <person name="Iijima Y."/>
            <person name="Najima M."/>
            <person name="Nakano M."/>
            <person name="Yamashita A."/>
            <person name="Kubota Y."/>
            <person name="Kimura S."/>
            <person name="Yasunaga T."/>
            <person name="Honda T."/>
            <person name="Shinagawa H."/>
            <person name="Hattori M."/>
            <person name="Iida T."/>
        </authorList>
    </citation>
    <scope>NUCLEOTIDE SEQUENCE [LARGE SCALE GENOMIC DNA]</scope>
    <source>
        <strain>RIMD 2210633</strain>
    </source>
</reference>
<protein>
    <recommendedName>
        <fullName evidence="1">Glucose-1-phosphate adenylyltransferase 2</fullName>
        <ecNumber evidence="1">2.7.7.27</ecNumber>
    </recommendedName>
    <alternativeName>
        <fullName evidence="1">ADP-glucose pyrophosphorylase 2</fullName>
        <shortName evidence="1">ADPGlc PPase 2</shortName>
    </alternativeName>
    <alternativeName>
        <fullName evidence="1">ADP-glucose synthase 2</fullName>
    </alternativeName>
</protein>
<evidence type="ECO:0000255" key="1">
    <source>
        <dbReference type="HAMAP-Rule" id="MF_00624"/>
    </source>
</evidence>
<accession>Q87HX3</accession>
<dbReference type="EC" id="2.7.7.27" evidence="1"/>
<dbReference type="EMBL" id="BA000032">
    <property type="protein sequence ID" value="BAC62176.1"/>
    <property type="molecule type" value="Genomic_DNA"/>
</dbReference>
<dbReference type="RefSeq" id="NP_800343.1">
    <property type="nucleotide sequence ID" value="NC_004605.1"/>
</dbReference>
<dbReference type="SMR" id="Q87HX3"/>
<dbReference type="GeneID" id="1191522"/>
<dbReference type="KEGG" id="vpa:VPA0833"/>
<dbReference type="PATRIC" id="fig|223926.6.peg.3763"/>
<dbReference type="eggNOG" id="COG0448">
    <property type="taxonomic scope" value="Bacteria"/>
</dbReference>
<dbReference type="HOGENOM" id="CLU_029499_14_1_6"/>
<dbReference type="UniPathway" id="UPA00164"/>
<dbReference type="Proteomes" id="UP000002493">
    <property type="component" value="Chromosome 2"/>
</dbReference>
<dbReference type="GO" id="GO:0005524">
    <property type="term" value="F:ATP binding"/>
    <property type="evidence" value="ECO:0007669"/>
    <property type="project" value="UniProtKB-KW"/>
</dbReference>
<dbReference type="GO" id="GO:0008878">
    <property type="term" value="F:glucose-1-phosphate adenylyltransferase activity"/>
    <property type="evidence" value="ECO:0007669"/>
    <property type="project" value="UniProtKB-UniRule"/>
</dbReference>
<dbReference type="GO" id="GO:0005978">
    <property type="term" value="P:glycogen biosynthetic process"/>
    <property type="evidence" value="ECO:0007669"/>
    <property type="project" value="UniProtKB-UniRule"/>
</dbReference>
<dbReference type="CDD" id="cd02508">
    <property type="entry name" value="ADP_Glucose_PP"/>
    <property type="match status" value="1"/>
</dbReference>
<dbReference type="CDD" id="cd04651">
    <property type="entry name" value="LbH_G1P_AT_C"/>
    <property type="match status" value="1"/>
</dbReference>
<dbReference type="Gene3D" id="2.160.10.10">
    <property type="entry name" value="Hexapeptide repeat proteins"/>
    <property type="match status" value="1"/>
</dbReference>
<dbReference type="Gene3D" id="3.90.550.10">
    <property type="entry name" value="Spore Coat Polysaccharide Biosynthesis Protein SpsA, Chain A"/>
    <property type="match status" value="1"/>
</dbReference>
<dbReference type="HAMAP" id="MF_00624">
    <property type="entry name" value="GlgC"/>
    <property type="match status" value="1"/>
</dbReference>
<dbReference type="InterPro" id="IPR011831">
    <property type="entry name" value="ADP-Glc_PPase"/>
</dbReference>
<dbReference type="InterPro" id="IPR005836">
    <property type="entry name" value="ADP_Glu_pyroP_CS"/>
</dbReference>
<dbReference type="InterPro" id="IPR023049">
    <property type="entry name" value="GlgC_bac"/>
</dbReference>
<dbReference type="InterPro" id="IPR056818">
    <property type="entry name" value="GlmU/GlgC-like_hexapep"/>
</dbReference>
<dbReference type="InterPro" id="IPR005835">
    <property type="entry name" value="NTP_transferase_dom"/>
</dbReference>
<dbReference type="InterPro" id="IPR029044">
    <property type="entry name" value="Nucleotide-diphossugar_trans"/>
</dbReference>
<dbReference type="InterPro" id="IPR011004">
    <property type="entry name" value="Trimer_LpxA-like_sf"/>
</dbReference>
<dbReference type="NCBIfam" id="TIGR02091">
    <property type="entry name" value="glgC"/>
    <property type="match status" value="1"/>
</dbReference>
<dbReference type="NCBIfam" id="NF001947">
    <property type="entry name" value="PRK00725.1"/>
    <property type="match status" value="1"/>
</dbReference>
<dbReference type="NCBIfam" id="NF002023">
    <property type="entry name" value="PRK00844.1"/>
    <property type="match status" value="1"/>
</dbReference>
<dbReference type="PANTHER" id="PTHR43523:SF2">
    <property type="entry name" value="GLUCOSE-1-PHOSPHATE ADENYLYLTRANSFERASE"/>
    <property type="match status" value="1"/>
</dbReference>
<dbReference type="PANTHER" id="PTHR43523">
    <property type="entry name" value="GLUCOSE-1-PHOSPHATE ADENYLYLTRANSFERASE-RELATED"/>
    <property type="match status" value="1"/>
</dbReference>
<dbReference type="Pfam" id="PF24894">
    <property type="entry name" value="Hexapep_GlmU"/>
    <property type="match status" value="1"/>
</dbReference>
<dbReference type="Pfam" id="PF00483">
    <property type="entry name" value="NTP_transferase"/>
    <property type="match status" value="1"/>
</dbReference>
<dbReference type="SUPFAM" id="SSF53448">
    <property type="entry name" value="Nucleotide-diphospho-sugar transferases"/>
    <property type="match status" value="1"/>
</dbReference>
<dbReference type="SUPFAM" id="SSF51161">
    <property type="entry name" value="Trimeric LpxA-like enzymes"/>
    <property type="match status" value="1"/>
</dbReference>
<dbReference type="PROSITE" id="PS00808">
    <property type="entry name" value="ADP_GLC_PYROPHOSPH_1"/>
    <property type="match status" value="1"/>
</dbReference>
<dbReference type="PROSITE" id="PS00809">
    <property type="entry name" value="ADP_GLC_PYROPHOSPH_2"/>
    <property type="match status" value="1"/>
</dbReference>
<dbReference type="PROSITE" id="PS00810">
    <property type="entry name" value="ADP_GLC_PYROPHOSPH_3"/>
    <property type="match status" value="1"/>
</dbReference>
<organism>
    <name type="scientific">Vibrio parahaemolyticus serotype O3:K6 (strain RIMD 2210633)</name>
    <dbReference type="NCBI Taxonomy" id="223926"/>
    <lineage>
        <taxon>Bacteria</taxon>
        <taxon>Pseudomonadati</taxon>
        <taxon>Pseudomonadota</taxon>
        <taxon>Gammaproteobacteria</taxon>
        <taxon>Vibrionales</taxon>
        <taxon>Vibrionaceae</taxon>
        <taxon>Vibrio</taxon>
    </lineage>
</organism>
<name>GLGC2_VIBPA</name>
<keyword id="KW-0067">ATP-binding</keyword>
<keyword id="KW-0119">Carbohydrate metabolism</keyword>
<keyword id="KW-0320">Glycogen biosynthesis</keyword>
<keyword id="KW-0321">Glycogen metabolism</keyword>
<keyword id="KW-0547">Nucleotide-binding</keyword>
<keyword id="KW-0548">Nucleotidyltransferase</keyword>
<keyword id="KW-0808">Transferase</keyword>
<gene>
    <name evidence="1" type="primary">glgC2</name>
    <name type="ordered locus">VPA0833</name>
</gene>
<sequence>MQDALAVILAGGMGSRLSPLTDDRAKPAVPFGGKYRIIDFTLTNCLNSGLRKILVLTQYKSHSLQKHLRDGWSIFNPELGEYITAVPPQMRKGGAWYEGTADAIYHNLWLLSRNDAKYVVVLSGDHIYRMDYAAMLEEHKEKGAKLTVACMDVPVKDASAFGVMGIAENGLVKSFVEKPENPPTLPDDNAKSLASMGIYIFDMDVLKEALTEDAKLETSSHDFGNDIIPKLIDTESVYAYKFCGSKGRVDKDCYWRDVGTIDSFYEANMDLLEPVPPMNLYQSNWAIRTYEPQFPPARTVSSATGNEGIFINSIIATGVINSGGSVQHSIISSNVRIQDSATVVDSIIFDDVEVGEGSQLVNCIVDKHVRIPPNTQIGINKVEDAKRFKISEKGIVVIPESYQF</sequence>
<proteinExistence type="inferred from homology"/>
<feature type="chain" id="PRO_0000195347" description="Glucose-1-phosphate adenylyltransferase 2">
    <location>
        <begin position="1"/>
        <end position="404"/>
    </location>
</feature>
<feature type="binding site" evidence="1">
    <location>
        <position position="97"/>
    </location>
    <ligand>
        <name>alpha-D-glucose 1-phosphate</name>
        <dbReference type="ChEBI" id="CHEBI:58601"/>
    </ligand>
</feature>
<feature type="binding site" evidence="1">
    <location>
        <position position="162"/>
    </location>
    <ligand>
        <name>alpha-D-glucose 1-phosphate</name>
        <dbReference type="ChEBI" id="CHEBI:58601"/>
    </ligand>
</feature>
<feature type="binding site" evidence="1">
    <location>
        <begin position="177"/>
        <end position="178"/>
    </location>
    <ligand>
        <name>alpha-D-glucose 1-phosphate</name>
        <dbReference type="ChEBI" id="CHEBI:58601"/>
    </ligand>
</feature>
<feature type="binding site" evidence="1">
    <location>
        <position position="195"/>
    </location>
    <ligand>
        <name>alpha-D-glucose 1-phosphate</name>
        <dbReference type="ChEBI" id="CHEBI:58601"/>
    </ligand>
</feature>